<feature type="chain" id="PRO_0000017581" description="Lectin beta chain">
    <location>
        <begin position="1"/>
        <end position="116"/>
    </location>
</feature>
<feature type="chain" id="PRO_0000017582" description="Lectin alpha chain">
    <location>
        <begin position="117"/>
        <end position="240"/>
    </location>
</feature>
<feature type="binding site" evidence="1">
    <location>
        <position position="127"/>
    </location>
    <ligand>
        <name>Mn(2+)</name>
        <dbReference type="ChEBI" id="CHEBI:29035"/>
    </ligand>
</feature>
<feature type="binding site" evidence="1">
    <location>
        <position position="129"/>
    </location>
    <ligand>
        <name>Ca(2+)</name>
        <dbReference type="ChEBI" id="CHEBI:29108"/>
    </ligand>
</feature>
<feature type="binding site" evidence="1">
    <location>
        <position position="129"/>
    </location>
    <ligand>
        <name>Mn(2+)</name>
        <dbReference type="ChEBI" id="CHEBI:29035"/>
    </ligand>
</feature>
<feature type="binding site" evidence="1">
    <location>
        <position position="131"/>
    </location>
    <ligand>
        <name>Ca(2+)</name>
        <dbReference type="ChEBI" id="CHEBI:29108"/>
    </ligand>
</feature>
<feature type="binding site" evidence="1">
    <location>
        <position position="133"/>
    </location>
    <ligand>
        <name>Ca(2+)</name>
        <dbReference type="ChEBI" id="CHEBI:29108"/>
    </ligand>
</feature>
<feature type="binding site" evidence="1">
    <location>
        <position position="138"/>
    </location>
    <ligand>
        <name>Ca(2+)</name>
        <dbReference type="ChEBI" id="CHEBI:29108"/>
    </ligand>
</feature>
<feature type="binding site" evidence="1">
    <location>
        <position position="138"/>
    </location>
    <ligand>
        <name>Mn(2+)</name>
        <dbReference type="ChEBI" id="CHEBI:29035"/>
    </ligand>
</feature>
<feature type="binding site" evidence="1">
    <location>
        <position position="143"/>
    </location>
    <ligand>
        <name>Mn(2+)</name>
        <dbReference type="ChEBI" id="CHEBI:29035"/>
    </ligand>
</feature>
<feature type="disulfide bond" description="Interchain">
    <location>
        <position position="5"/>
    </location>
</feature>
<feature type="sequence variant" evidence="3">
    <original>H</original>
    <variation>S</variation>
    <location>
        <position position="143"/>
    </location>
</feature>
<feature type="sequence variant" evidence="3">
    <original>K</original>
    <variation>R</variation>
    <location>
        <position position="158"/>
    </location>
</feature>
<feature type="sequence variant" evidence="3">
    <original>S</original>
    <variation>R</variation>
    <location>
        <position position="177"/>
    </location>
</feature>
<feature type="sequence variant" evidence="3">
    <original>P</original>
    <variation>V</variation>
    <location>
        <position position="187"/>
    </location>
</feature>
<feature type="sequence variant" evidence="3">
    <original>V</original>
    <variation>A</variation>
    <location>
        <position position="203"/>
    </location>
</feature>
<feature type="unsure residue">
    <location>
        <begin position="86"/>
        <end position="90"/>
    </location>
</feature>
<feature type="unsure residue">
    <location>
        <position position="116"/>
    </location>
</feature>
<feature type="strand" evidence="5">
    <location>
        <begin position="3"/>
        <end position="10"/>
    </location>
</feature>
<feature type="strand" evidence="5">
    <location>
        <begin position="18"/>
        <end position="22"/>
    </location>
</feature>
<feature type="strand" evidence="5">
    <location>
        <begin position="48"/>
        <end position="55"/>
    </location>
</feature>
<feature type="strand" evidence="5">
    <location>
        <begin position="65"/>
        <end position="76"/>
    </location>
</feature>
<feature type="strand" evidence="5">
    <location>
        <begin position="79"/>
        <end position="83"/>
    </location>
</feature>
<feature type="strand" evidence="5">
    <location>
        <begin position="87"/>
        <end position="93"/>
    </location>
</feature>
<feature type="helix" evidence="5">
    <location>
        <begin position="105"/>
        <end position="107"/>
    </location>
</feature>
<feature type="turn" evidence="5">
    <location>
        <begin position="108"/>
        <end position="110"/>
    </location>
</feature>
<feature type="strand" evidence="5">
    <location>
        <begin position="123"/>
        <end position="129"/>
    </location>
</feature>
<feature type="helix" evidence="5">
    <location>
        <begin position="134"/>
        <end position="136"/>
    </location>
</feature>
<feature type="strand" evidence="5">
    <location>
        <begin position="143"/>
        <end position="152"/>
    </location>
</feature>
<feature type="strand" evidence="5">
    <location>
        <begin position="154"/>
        <end position="158"/>
    </location>
</feature>
<feature type="strand" evidence="5">
    <location>
        <begin position="166"/>
        <end position="174"/>
    </location>
</feature>
<feature type="turn" evidence="5">
    <location>
        <begin position="175"/>
        <end position="178"/>
    </location>
</feature>
<feature type="strand" evidence="5">
    <location>
        <begin position="179"/>
        <end position="185"/>
    </location>
</feature>
<feature type="strand" evidence="5">
    <location>
        <begin position="192"/>
        <end position="197"/>
    </location>
</feature>
<feature type="helix" evidence="5">
    <location>
        <begin position="200"/>
        <end position="202"/>
    </location>
</feature>
<feature type="strand" evidence="5">
    <location>
        <begin position="206"/>
        <end position="215"/>
    </location>
</feature>
<feature type="strand" evidence="5">
    <location>
        <begin position="224"/>
        <end position="235"/>
    </location>
</feature>
<dbReference type="PDB" id="2FMD">
    <property type="method" value="X-ray"/>
    <property type="resolution" value="1.90 A"/>
    <property type="chains" value="A=1-240"/>
</dbReference>
<dbReference type="PDBsum" id="2FMD"/>
<dbReference type="SMR" id="P42088"/>
<dbReference type="UniLectin" id="P42088"/>
<dbReference type="EvolutionaryTrace" id="P42088"/>
<dbReference type="GO" id="GO:0030246">
    <property type="term" value="F:carbohydrate binding"/>
    <property type="evidence" value="ECO:0000314"/>
    <property type="project" value="UniProtKB"/>
</dbReference>
<dbReference type="GO" id="GO:0046872">
    <property type="term" value="F:metal ion binding"/>
    <property type="evidence" value="ECO:0007669"/>
    <property type="project" value="UniProtKB-KW"/>
</dbReference>
<dbReference type="CDD" id="cd06899">
    <property type="entry name" value="lectin_legume_LecRK_Arcelin_ConA"/>
    <property type="match status" value="1"/>
</dbReference>
<dbReference type="FunFam" id="2.60.120.200:FF:000237">
    <property type="entry name" value="Mannose/glucose-specific lectin"/>
    <property type="match status" value="1"/>
</dbReference>
<dbReference type="Gene3D" id="2.60.120.200">
    <property type="match status" value="1"/>
</dbReference>
<dbReference type="InterPro" id="IPR013320">
    <property type="entry name" value="ConA-like_dom_sf"/>
</dbReference>
<dbReference type="InterPro" id="IPR016363">
    <property type="entry name" value="L-lectin"/>
</dbReference>
<dbReference type="InterPro" id="IPR019825">
    <property type="entry name" value="Lectin_legB_Mn/Ca_BS"/>
</dbReference>
<dbReference type="InterPro" id="IPR001220">
    <property type="entry name" value="Legume_lectin_dom"/>
</dbReference>
<dbReference type="InterPro" id="IPR050258">
    <property type="entry name" value="Leguminous_Lectin"/>
</dbReference>
<dbReference type="PANTHER" id="PTHR32401">
    <property type="entry name" value="CONCANAVALIN A-LIKE LECTIN FAMILY PROTEIN"/>
    <property type="match status" value="1"/>
</dbReference>
<dbReference type="PANTHER" id="PTHR32401:SF47">
    <property type="entry name" value="LEGUME LECTIN DOMAIN-CONTAINING PROTEIN"/>
    <property type="match status" value="1"/>
</dbReference>
<dbReference type="Pfam" id="PF00139">
    <property type="entry name" value="Lectin_legB"/>
    <property type="match status" value="1"/>
</dbReference>
<dbReference type="PIRSF" id="PIRSF002690">
    <property type="entry name" value="L-type_lectin_plant"/>
    <property type="match status" value="1"/>
</dbReference>
<dbReference type="SUPFAM" id="SSF49899">
    <property type="entry name" value="Concanavalin A-like lectins/glucanases"/>
    <property type="match status" value="1"/>
</dbReference>
<dbReference type="PROSITE" id="PS00307">
    <property type="entry name" value="LECTIN_LEGUME_BETA"/>
    <property type="match status" value="1"/>
</dbReference>
<protein>
    <recommendedName>
        <fullName>Lectin</fullName>
    </recommendedName>
    <alternativeName>
        <fullName>Agglutinin</fullName>
    </alternativeName>
    <alternativeName>
        <fullName>BMA</fullName>
    </alternativeName>
    <component>
        <recommendedName>
            <fullName>Lectin beta chain</fullName>
        </recommendedName>
    </component>
    <component>
        <recommendedName>
            <fullName>Lectin alpha chain</fullName>
        </recommendedName>
    </component>
</protein>
<evidence type="ECO:0000250" key="1"/>
<evidence type="ECO:0000269" key="2">
    <source>
    </source>
</evidence>
<evidence type="ECO:0000269" key="3">
    <source>
    </source>
</evidence>
<evidence type="ECO:0000305" key="4"/>
<evidence type="ECO:0007829" key="5">
    <source>
        <dbReference type="PDB" id="2FMD"/>
    </source>
</evidence>
<organism>
    <name type="scientific">Leucomphalos mildbraedii</name>
    <name type="common">Bowringia mildbraedii</name>
    <dbReference type="NCBI Taxonomy" id="28956"/>
    <lineage>
        <taxon>Eukaryota</taxon>
        <taxon>Viridiplantae</taxon>
        <taxon>Streptophyta</taxon>
        <taxon>Embryophyta</taxon>
        <taxon>Tracheophyta</taxon>
        <taxon>Spermatophyta</taxon>
        <taxon>Magnoliopsida</taxon>
        <taxon>eudicotyledons</taxon>
        <taxon>Gunneridae</taxon>
        <taxon>Pentapetalae</taxon>
        <taxon>rosids</taxon>
        <taxon>fabids</taxon>
        <taxon>Fabales</taxon>
        <taxon>Fabaceae</taxon>
        <taxon>Papilionoideae</taxon>
        <taxon>50 kb inversion clade</taxon>
        <taxon>Baphieae</taxon>
        <taxon>Leucomphalos</taxon>
    </lineage>
</organism>
<accession>P42088</accession>
<keyword id="KW-0002">3D-structure</keyword>
<keyword id="KW-0106">Calcium</keyword>
<keyword id="KW-0903">Direct protein sequencing</keyword>
<keyword id="KW-1015">Disulfide bond</keyword>
<keyword id="KW-0430">Lectin</keyword>
<keyword id="KW-0464">Manganese</keyword>
<keyword id="KW-0479">Metal-binding</keyword>
<comment type="function">
    <text evidence="2">Binds preferentially to oligosaccharides bearing the sequence Man-alpha-1-&gt;2 Man-alpha-1-&gt;6 Man-alpha-1-&gt;6Man found in early steps of glycoprotein processing in the endoplasmic reticulum. It binds weakly to highly processed oligosaccharide structures.</text>
</comment>
<comment type="subunit">
    <text>Heterotetramer of two alpha and two beta chains; disulfide bond linked.</text>
</comment>
<comment type="miscellaneous">
    <text>Binds one manganese (or another transition metal) ion and one calcium ion. The metal ions are essential for the saccharide-binding and cell-agglutinating activities.</text>
</comment>
<comment type="similarity">
    <text evidence="4">Belongs to the leguminous lectin family.</text>
</comment>
<proteinExistence type="evidence at protein level"/>
<sequence>ANSVCFTFTDFESGQQDLIFQGDASVGSNKALQLTKVDSKGNPQGGSVGRALYTAPIRLWQSSSLVASFETTFTFSISQGSSTPAAALTFFIASPDTKIPSGSGGRLLGLFGSSNNAGSDNGVVAVEFDTYPNTDIGDPNYRHIGIDVNSIRSKAASKWDWQNGKTATAHISYNSASKRLSVVSSYPNSSPVVVSFDVELNNVGPPDVRVGFSATTGQYTQTNNILAWSFRSSLMGYQAN</sequence>
<reference key="1">
    <citation type="journal article" date="1993" name="Biochim. Biophys. Acta">
        <title>Bowringia mildbraedii agglutinin: polypeptide composition, primary structure and homologies with other legume lectins.</title>
        <authorList>
            <person name="Chawla D."/>
            <person name="Animashaun T."/>
            <person name="Hughes R.C."/>
            <person name="Harris A."/>
            <person name="Aitken A."/>
        </authorList>
    </citation>
    <scope>PROTEIN SEQUENCE</scope>
    <scope>VARIANTS SER-143; ARG-158; ARG-177; VAL-187 AND ALA-203</scope>
    <source>
        <tissue>Seed</tissue>
    </source>
</reference>
<reference key="2">
    <citation type="journal article" date="1989" name="J. Biol. Chem.">
        <title>Bowringia milbraedii agglutinin. Specificity of binding to early processing intermediates of asparagine-linked oligosaccharide and use as a marker of endoplasmic reticulum glycoproteins.</title>
        <authorList>
            <person name="Animashaun T."/>
            <person name="Hughes R.C."/>
        </authorList>
    </citation>
    <scope>FUNCTION</scope>
</reference>
<name>LEC_LEUMI</name>